<gene>
    <name evidence="11" type="primary">Tk</name>
    <name type="ORF">CG14734</name>
</gene>
<sequence>MRPLSGLIALALLLLLLLTAPSSAADTETESSGSPLTPGAEEPRRVVKRAPTSSFIGMRGKKDEEHDTSEGNWLGSGPDPLDYADEEADSSYAENGRRLKKAPLAFVGLRGKKFIPINNRLSDVLQSLEEERLRDSLLQDFFDRVAGRDGSAVGKRAPTGFTGMRGKRPALLAGDDDAEADEATELQQKRAPVNSFVGMRGKKDVSHQHYKRAALSDSYDLRGKQQRFADFNSKFVAVRGKKSDLEGNGVGIGDDHEQALVHPWLYLWGEKRAPNGFLGMRGKRPALFE</sequence>
<keyword id="KW-0027">Amidation</keyword>
<keyword id="KW-0085">Behavior</keyword>
<keyword id="KW-0165">Cleavage on pair of basic residues</keyword>
<keyword id="KW-0903">Direct protein sequencing</keyword>
<keyword id="KW-0527">Neuropeptide</keyword>
<keyword id="KW-1185">Reference proteome</keyword>
<keyword id="KW-0964">Secreted</keyword>
<keyword id="KW-0732">Signal</keyword>
<feature type="signal peptide" evidence="1">
    <location>
        <begin position="1"/>
        <end position="24"/>
    </location>
</feature>
<feature type="propeptide" id="PRO_0000343488" evidence="1 8">
    <location>
        <begin position="25"/>
        <end position="47"/>
    </location>
</feature>
<feature type="peptide" id="PRO_0000343489" description="Tachykinin-related peptide 1" evidence="6">
    <location>
        <begin position="50"/>
        <end position="59"/>
    </location>
</feature>
<feature type="peptide" id="PRO_0000343490" description="Tachykinin-associated peptide 1" evidence="1">
    <location>
        <begin position="63"/>
        <end position="95"/>
    </location>
</feature>
<feature type="peptide" id="PRO_0000343491" description="Tachykinin-related peptide 2" evidence="6">
    <location>
        <begin position="102"/>
        <end position="110"/>
    </location>
</feature>
<feature type="peptide" id="PRO_0000343492" description="Tachykinin-associated peptide 2" evidence="1">
    <location>
        <begin position="114"/>
        <end position="153"/>
    </location>
</feature>
<feature type="peptide" id="PRO_0000343493" description="Tachykinin-related peptide 3" evidence="6">
    <location>
        <begin position="157"/>
        <end position="165"/>
    </location>
</feature>
<feature type="peptide" id="PRO_0000343494" description="Tachykinin-associated peptide 3" evidence="1">
    <location>
        <begin position="169"/>
        <end position="188"/>
    </location>
</feature>
<feature type="peptide" id="PRO_0000343495" description="Tachykinin-related peptide 4" evidence="6">
    <location>
        <begin position="191"/>
        <end position="200"/>
    </location>
</feature>
<feature type="peptide" id="PRO_0000343496" description="Tachykinin-associated peptide 4" evidence="1">
    <location>
        <begin position="204"/>
        <end position="210"/>
    </location>
</feature>
<feature type="peptide" id="PRO_0000343497" description="Tachykinin-associated peptide 5" evidence="1">
    <location>
        <begin position="213"/>
        <end position="239"/>
    </location>
</feature>
<feature type="peptide" id="PRO_0000343498" description="Tachykinin-associated peptide 6" evidence="1">
    <location>
        <begin position="243"/>
        <end position="270"/>
    </location>
</feature>
<feature type="peptide" id="PRO_0000343499" description="Tachykinin-related peptide 5" evidence="6">
    <location>
        <begin position="273"/>
        <end position="281"/>
    </location>
</feature>
<feature type="propeptide" id="PRO_0000343500" evidence="1 8">
    <location>
        <begin position="285"/>
        <end position="289"/>
    </location>
</feature>
<feature type="region of interest" description="Disordered" evidence="2">
    <location>
        <begin position="24"/>
        <end position="94"/>
    </location>
</feature>
<feature type="compositionally biased region" description="Basic and acidic residues" evidence="2">
    <location>
        <begin position="60"/>
        <end position="69"/>
    </location>
</feature>
<feature type="modified residue" description="Arginine amide" evidence="6">
    <location>
        <position position="59"/>
    </location>
</feature>
<feature type="modified residue" description="Asparagine amide" evidence="1 8">
    <location>
        <position position="95"/>
    </location>
</feature>
<feature type="modified residue" description="Arginine amide" evidence="6">
    <location>
        <position position="110"/>
    </location>
</feature>
<feature type="modified residue" description="Valine amide" evidence="1 8">
    <location>
        <position position="153"/>
    </location>
</feature>
<feature type="modified residue" description="Arginine amide" evidence="6">
    <location>
        <position position="165"/>
    </location>
</feature>
<feature type="modified residue" description="Arginine amide" evidence="6">
    <location>
        <position position="200"/>
    </location>
</feature>
<feature type="modified residue" description="Arginine amide" evidence="1 8">
    <location>
        <position position="239"/>
    </location>
</feature>
<feature type="modified residue" description="Arginine amide" evidence="6">
    <location>
        <position position="281"/>
    </location>
</feature>
<feature type="sequence conflict" description="In Ref. 1; AAF89172." evidence="10" ref="1">
    <original>D</original>
    <variation>G</variation>
    <location>
        <position position="175"/>
    </location>
</feature>
<feature type="sequence conflict" description="In Ref. 4; AAL48801." evidence="10" ref="4">
    <original>D</original>
    <variation>E</variation>
    <location>
        <position position="254"/>
    </location>
</feature>
<feature type="sequence conflict" description="In Ref. 1; AAF89172." evidence="10" ref="1">
    <original>D</original>
    <variation>N</variation>
    <location>
        <position position="255"/>
    </location>
</feature>
<feature type="sequence conflict" description="In Ref. 1; AAF89172." evidence="10" ref="1">
    <original>F</original>
    <variation>S</variation>
    <location>
        <position position="288"/>
    </location>
</feature>
<organism>
    <name type="scientific">Drosophila melanogaster</name>
    <name type="common">Fruit fly</name>
    <dbReference type="NCBI Taxonomy" id="7227"/>
    <lineage>
        <taxon>Eukaryota</taxon>
        <taxon>Metazoa</taxon>
        <taxon>Ecdysozoa</taxon>
        <taxon>Arthropoda</taxon>
        <taxon>Hexapoda</taxon>
        <taxon>Insecta</taxon>
        <taxon>Pterygota</taxon>
        <taxon>Neoptera</taxon>
        <taxon>Endopterygota</taxon>
        <taxon>Diptera</taxon>
        <taxon>Brachycera</taxon>
        <taxon>Muscomorpha</taxon>
        <taxon>Ephydroidea</taxon>
        <taxon>Drosophilidae</taxon>
        <taxon>Drosophila</taxon>
        <taxon>Sophophora</taxon>
    </lineage>
</organism>
<proteinExistence type="evidence at protein level"/>
<dbReference type="EMBL" id="AF248040">
    <property type="protein sequence ID" value="AAF89172.1"/>
    <property type="molecule type" value="mRNA"/>
</dbReference>
<dbReference type="EMBL" id="AE014297">
    <property type="protein sequence ID" value="AAF54735.1"/>
    <property type="molecule type" value="Genomic_DNA"/>
</dbReference>
<dbReference type="EMBL" id="AY071179">
    <property type="protein sequence ID" value="AAL48801.1"/>
    <property type="molecule type" value="mRNA"/>
</dbReference>
<dbReference type="EMBL" id="BT044493">
    <property type="protein sequence ID" value="ACH95267.1"/>
    <property type="molecule type" value="mRNA"/>
</dbReference>
<dbReference type="RefSeq" id="NP_650141.2">
    <property type="nucleotide sequence ID" value="NM_141884.4"/>
</dbReference>
<dbReference type="BioGRID" id="66573">
    <property type="interactions" value="4"/>
</dbReference>
<dbReference type="FunCoup" id="Q9VGE8">
    <property type="interactions" value="45"/>
</dbReference>
<dbReference type="IntAct" id="Q9VGE8">
    <property type="interactions" value="1"/>
</dbReference>
<dbReference type="STRING" id="7227.FBpp0307416"/>
<dbReference type="PaxDb" id="7227-FBpp0081962"/>
<dbReference type="DNASU" id="41456"/>
<dbReference type="EnsemblMetazoa" id="FBtr0082488">
    <property type="protein sequence ID" value="FBpp0081962"/>
    <property type="gene ID" value="FBgn0037976"/>
</dbReference>
<dbReference type="GeneID" id="41456"/>
<dbReference type="KEGG" id="dme:Dmel_CG14734"/>
<dbReference type="UCSC" id="CG14734-RA">
    <property type="organism name" value="d. melanogaster"/>
</dbReference>
<dbReference type="AGR" id="FB:FBgn0037976"/>
<dbReference type="CTD" id="21874"/>
<dbReference type="FlyBase" id="FBgn0037976">
    <property type="gene designation" value="Tk"/>
</dbReference>
<dbReference type="VEuPathDB" id="VectorBase:FBgn0037976"/>
<dbReference type="eggNOG" id="ENOG502S9VB">
    <property type="taxonomic scope" value="Eukaryota"/>
</dbReference>
<dbReference type="InParanoid" id="Q9VGE8"/>
<dbReference type="OrthoDB" id="5919137at2759"/>
<dbReference type="PhylomeDB" id="Q9VGE8"/>
<dbReference type="BioGRID-ORCS" id="41456">
    <property type="hits" value="0 hits in 1 CRISPR screen"/>
</dbReference>
<dbReference type="ChiTaRS" id="Tk">
    <property type="organism name" value="fly"/>
</dbReference>
<dbReference type="GenomeRNAi" id="41456"/>
<dbReference type="PRO" id="PR:Q9VGE8"/>
<dbReference type="Proteomes" id="UP000000803">
    <property type="component" value="Chromosome 3R"/>
</dbReference>
<dbReference type="Bgee" id="FBgn0037976">
    <property type="expression patterns" value="Expressed in adult anterior midgut class II enteroendocrine cell in adult midgut (Drosophila) and 89 other cell types or tissues"/>
</dbReference>
<dbReference type="ExpressionAtlas" id="Q9VGE8">
    <property type="expression patterns" value="baseline and differential"/>
</dbReference>
<dbReference type="GO" id="GO:0005615">
    <property type="term" value="C:extracellular space"/>
    <property type="evidence" value="ECO:0000314"/>
    <property type="project" value="UniProtKB"/>
</dbReference>
<dbReference type="GO" id="GO:0005184">
    <property type="term" value="F:neuropeptide hormone activity"/>
    <property type="evidence" value="ECO:0000250"/>
    <property type="project" value="FlyBase"/>
</dbReference>
<dbReference type="GO" id="GO:0005102">
    <property type="term" value="F:signaling receptor binding"/>
    <property type="evidence" value="ECO:0000303"/>
    <property type="project" value="FlyBase"/>
</dbReference>
<dbReference type="GO" id="GO:0071861">
    <property type="term" value="F:tachykinin receptor binding"/>
    <property type="evidence" value="ECO:0000353"/>
    <property type="project" value="FlyBase"/>
</dbReference>
<dbReference type="GO" id="GO:0007628">
    <property type="term" value="P:adult walking behavior"/>
    <property type="evidence" value="ECO:0000315"/>
    <property type="project" value="FlyBase"/>
</dbReference>
<dbReference type="GO" id="GO:0002121">
    <property type="term" value="P:inter-male aggressive behavior"/>
    <property type="evidence" value="ECO:0000315"/>
    <property type="project" value="FlyBase"/>
</dbReference>
<dbReference type="GO" id="GO:0006629">
    <property type="term" value="P:lipid metabolic process"/>
    <property type="evidence" value="ECO:0000315"/>
    <property type="project" value="FlyBase"/>
</dbReference>
<dbReference type="GO" id="GO:0007218">
    <property type="term" value="P:neuropeptide signaling pathway"/>
    <property type="evidence" value="ECO:0007669"/>
    <property type="project" value="UniProtKB-KW"/>
</dbReference>
<dbReference type="GO" id="GO:0060450">
    <property type="term" value="P:positive regulation of hindgut contraction"/>
    <property type="evidence" value="ECO:0000315"/>
    <property type="project" value="UniProtKB"/>
</dbReference>
<dbReference type="GO" id="GO:1904058">
    <property type="term" value="P:positive regulation of sensory perception of pain"/>
    <property type="evidence" value="ECO:0000315"/>
    <property type="project" value="FlyBase"/>
</dbReference>
<dbReference type="GO" id="GO:0019236">
    <property type="term" value="P:response to pheromone"/>
    <property type="evidence" value="ECO:0000315"/>
    <property type="project" value="FlyBase"/>
</dbReference>
<dbReference type="GO" id="GO:0007608">
    <property type="term" value="P:sensory perception of smell"/>
    <property type="evidence" value="ECO:0000315"/>
    <property type="project" value="FlyBase"/>
</dbReference>
<dbReference type="GO" id="GO:0007217">
    <property type="term" value="P:tachykinin receptor signaling pathway"/>
    <property type="evidence" value="ECO:0000314"/>
    <property type="project" value="FlyBase"/>
</dbReference>
<protein>
    <recommendedName>
        <fullName>Tachykinins</fullName>
    </recommendedName>
    <alternativeName>
        <fullName>dTk</fullName>
    </alternativeName>
    <component>
        <recommendedName>
            <fullName>Tachykinin-related peptide 1</fullName>
            <shortName>TK-1</shortName>
            <shortName>dTK-1</shortName>
        </recommendedName>
        <alternativeName>
            <fullName>APTSSFIGMR-amide</fullName>
        </alternativeName>
    </component>
    <component>
        <recommendedName>
            <fullName>Tachykinin-associated peptide 1</fullName>
            <shortName>TAP1</shortName>
        </recommendedName>
        <alternativeName>
            <fullName>DEEHDTSEGNWLGSGPDPLDYADEEADSSYAEN-amide</fullName>
        </alternativeName>
    </component>
    <component>
        <recommendedName>
            <fullName>Tachykinin-related peptide 2</fullName>
            <shortName>TK-2</shortName>
            <shortName>dTK-2</shortName>
        </recommendedName>
        <alternativeName>
            <fullName>APLAFVGLR-amide</fullName>
        </alternativeName>
    </component>
    <component>
        <recommendedName>
            <fullName>Tachykinin-associated peptide 2</fullName>
            <shortName>TAP2</shortName>
        </recommendedName>
        <alternativeName>
            <fullName>FIPINNRLSDVLQSLEEERLRDSLLQDFFDRVAGRDGSAV-amide</fullName>
        </alternativeName>
    </component>
    <component>
        <recommendedName>
            <fullName>Tachykinin-related peptide 3</fullName>
            <shortName>TK-3</shortName>
            <shortName>dTK-3</shortName>
        </recommendedName>
        <alternativeName>
            <fullName>APTGFTGMR-amide</fullName>
        </alternativeName>
    </component>
    <component>
        <recommendedName>
            <fullName>Tachykinin-associated peptide 3</fullName>
            <shortName>TAP3</shortName>
        </recommendedName>
        <alternativeName>
            <fullName>Brain peptide PALLAGDDDAEADEATELQQ</fullName>
        </alternativeName>
    </component>
    <component>
        <recommendedName>
            <fullName>Tachykinin-related peptide 4</fullName>
            <shortName>TK-4</shortName>
            <shortName>dTK-4</shortName>
        </recommendedName>
        <alternativeName>
            <fullName>APVNSFVGMR-amide</fullName>
        </alternativeName>
    </component>
    <component>
        <recommendedName>
            <fullName>Tachykinin-associated peptide 4</fullName>
            <shortName>TAP4</shortName>
        </recommendedName>
        <alternativeName>
            <fullName>Brain peptide DVSHQHY</fullName>
        </alternativeName>
    </component>
    <component>
        <recommendedName>
            <fullName>Tachykinin-associated peptide 5</fullName>
            <shortName>TAP5</shortName>
        </recommendedName>
        <alternativeName>
            <fullName>AALSDSYDLRGKQQRFADFNSKFVAVR-amide</fullName>
        </alternativeName>
    </component>
    <component>
        <recommendedName>
            <fullName>Tachykinin-associated peptide 6</fullName>
            <shortName>TAP6</shortName>
        </recommendedName>
        <alternativeName>
            <fullName>Brain peptide SDLEGNGVGIGDDHEQALVHPWLYLWGE</fullName>
        </alternativeName>
    </component>
    <component>
        <recommendedName>
            <fullName>Tachykinin-related peptide 5</fullName>
            <shortName>TK-5</shortName>
            <shortName>dTK-5</shortName>
        </recommendedName>
        <alternativeName>
            <fullName>APNGFLGMR-amide</fullName>
        </alternativeName>
    </component>
</protein>
<accession>Q9VGE8</accession>
<accession>B5RJL9</accession>
<accession>Q8SZ21</accession>
<accession>Q9NBJ5</accession>
<name>TACHY_DROME</name>
<reference evidence="10 12" key="1">
    <citation type="journal article" date="2000" name="J. Biol. Chem.">
        <title>Expression and functional characterization of a Drosophila neuropeptide precursor with homology to mammalian preprotachykinin A.</title>
        <authorList>
            <person name="Siviter R.J."/>
            <person name="Coast G.M."/>
            <person name="Winther A.M.E."/>
            <person name="Nachman R.J."/>
            <person name="Taylor C.A.M."/>
            <person name="Shirras A.D."/>
            <person name="Coates D."/>
            <person name="Isaac R.E."/>
            <person name="Nassel D.R."/>
        </authorList>
    </citation>
    <scope>NUCLEOTIDE SEQUENCE [MRNA]</scope>
    <scope>FUNCTION</scope>
    <scope>TISSUE SPECIFICITY</scope>
    <scope>SYNTHESIS</scope>
    <scope>AMIDATION AT ASN-95; VAL-153 AND ARG-239</scope>
    <source>
        <tissue evidence="12">Head</tissue>
    </source>
</reference>
<reference key="2">
    <citation type="journal article" date="2000" name="Science">
        <title>The genome sequence of Drosophila melanogaster.</title>
        <authorList>
            <person name="Adams M.D."/>
            <person name="Celniker S.E."/>
            <person name="Holt R.A."/>
            <person name="Evans C.A."/>
            <person name="Gocayne J.D."/>
            <person name="Amanatides P.G."/>
            <person name="Scherer S.E."/>
            <person name="Li P.W."/>
            <person name="Hoskins R.A."/>
            <person name="Galle R.F."/>
            <person name="George R.A."/>
            <person name="Lewis S.E."/>
            <person name="Richards S."/>
            <person name="Ashburner M."/>
            <person name="Henderson S.N."/>
            <person name="Sutton G.G."/>
            <person name="Wortman J.R."/>
            <person name="Yandell M.D."/>
            <person name="Zhang Q."/>
            <person name="Chen L.X."/>
            <person name="Brandon R.C."/>
            <person name="Rogers Y.-H.C."/>
            <person name="Blazej R.G."/>
            <person name="Champe M."/>
            <person name="Pfeiffer B.D."/>
            <person name="Wan K.H."/>
            <person name="Doyle C."/>
            <person name="Baxter E.G."/>
            <person name="Helt G."/>
            <person name="Nelson C.R."/>
            <person name="Miklos G.L.G."/>
            <person name="Abril J.F."/>
            <person name="Agbayani A."/>
            <person name="An H.-J."/>
            <person name="Andrews-Pfannkoch C."/>
            <person name="Baldwin D."/>
            <person name="Ballew R.M."/>
            <person name="Basu A."/>
            <person name="Baxendale J."/>
            <person name="Bayraktaroglu L."/>
            <person name="Beasley E.M."/>
            <person name="Beeson K.Y."/>
            <person name="Benos P.V."/>
            <person name="Berman B.P."/>
            <person name="Bhandari D."/>
            <person name="Bolshakov S."/>
            <person name="Borkova D."/>
            <person name="Botchan M.R."/>
            <person name="Bouck J."/>
            <person name="Brokstein P."/>
            <person name="Brottier P."/>
            <person name="Burtis K.C."/>
            <person name="Busam D.A."/>
            <person name="Butler H."/>
            <person name="Cadieu E."/>
            <person name="Center A."/>
            <person name="Chandra I."/>
            <person name="Cherry J.M."/>
            <person name="Cawley S."/>
            <person name="Dahlke C."/>
            <person name="Davenport L.B."/>
            <person name="Davies P."/>
            <person name="de Pablos B."/>
            <person name="Delcher A."/>
            <person name="Deng Z."/>
            <person name="Mays A.D."/>
            <person name="Dew I."/>
            <person name="Dietz S.M."/>
            <person name="Dodson K."/>
            <person name="Doup L.E."/>
            <person name="Downes M."/>
            <person name="Dugan-Rocha S."/>
            <person name="Dunkov B.C."/>
            <person name="Dunn P."/>
            <person name="Durbin K.J."/>
            <person name="Evangelista C.C."/>
            <person name="Ferraz C."/>
            <person name="Ferriera S."/>
            <person name="Fleischmann W."/>
            <person name="Fosler C."/>
            <person name="Gabrielian A.E."/>
            <person name="Garg N.S."/>
            <person name="Gelbart W.M."/>
            <person name="Glasser K."/>
            <person name="Glodek A."/>
            <person name="Gong F."/>
            <person name="Gorrell J.H."/>
            <person name="Gu Z."/>
            <person name="Guan P."/>
            <person name="Harris M."/>
            <person name="Harris N.L."/>
            <person name="Harvey D.A."/>
            <person name="Heiman T.J."/>
            <person name="Hernandez J.R."/>
            <person name="Houck J."/>
            <person name="Hostin D."/>
            <person name="Houston K.A."/>
            <person name="Howland T.J."/>
            <person name="Wei M.-H."/>
            <person name="Ibegwam C."/>
            <person name="Jalali M."/>
            <person name="Kalush F."/>
            <person name="Karpen G.H."/>
            <person name="Ke Z."/>
            <person name="Kennison J.A."/>
            <person name="Ketchum K.A."/>
            <person name="Kimmel B.E."/>
            <person name="Kodira C.D."/>
            <person name="Kraft C.L."/>
            <person name="Kravitz S."/>
            <person name="Kulp D."/>
            <person name="Lai Z."/>
            <person name="Lasko P."/>
            <person name="Lei Y."/>
            <person name="Levitsky A.A."/>
            <person name="Li J.H."/>
            <person name="Li Z."/>
            <person name="Liang Y."/>
            <person name="Lin X."/>
            <person name="Liu X."/>
            <person name="Mattei B."/>
            <person name="McIntosh T.C."/>
            <person name="McLeod M.P."/>
            <person name="McPherson D."/>
            <person name="Merkulov G."/>
            <person name="Milshina N.V."/>
            <person name="Mobarry C."/>
            <person name="Morris J."/>
            <person name="Moshrefi A."/>
            <person name="Mount S.M."/>
            <person name="Moy M."/>
            <person name="Murphy B."/>
            <person name="Murphy L."/>
            <person name="Muzny D.M."/>
            <person name="Nelson D.L."/>
            <person name="Nelson D.R."/>
            <person name="Nelson K.A."/>
            <person name="Nixon K."/>
            <person name="Nusskern D.R."/>
            <person name="Pacleb J.M."/>
            <person name="Palazzolo M."/>
            <person name="Pittman G.S."/>
            <person name="Pan S."/>
            <person name="Pollard J."/>
            <person name="Puri V."/>
            <person name="Reese M.G."/>
            <person name="Reinert K."/>
            <person name="Remington K."/>
            <person name="Saunders R.D.C."/>
            <person name="Scheeler F."/>
            <person name="Shen H."/>
            <person name="Shue B.C."/>
            <person name="Siden-Kiamos I."/>
            <person name="Simpson M."/>
            <person name="Skupski M.P."/>
            <person name="Smith T.J."/>
            <person name="Spier E."/>
            <person name="Spradling A.C."/>
            <person name="Stapleton M."/>
            <person name="Strong R."/>
            <person name="Sun E."/>
            <person name="Svirskas R."/>
            <person name="Tector C."/>
            <person name="Turner R."/>
            <person name="Venter E."/>
            <person name="Wang A.H."/>
            <person name="Wang X."/>
            <person name="Wang Z.-Y."/>
            <person name="Wassarman D.A."/>
            <person name="Weinstock G.M."/>
            <person name="Weissenbach J."/>
            <person name="Williams S.M."/>
            <person name="Woodage T."/>
            <person name="Worley K.C."/>
            <person name="Wu D."/>
            <person name="Yang S."/>
            <person name="Yao Q.A."/>
            <person name="Ye J."/>
            <person name="Yeh R.-F."/>
            <person name="Zaveri J.S."/>
            <person name="Zhan M."/>
            <person name="Zhang G."/>
            <person name="Zhao Q."/>
            <person name="Zheng L."/>
            <person name="Zheng X.H."/>
            <person name="Zhong F.N."/>
            <person name="Zhong W."/>
            <person name="Zhou X."/>
            <person name="Zhu S.C."/>
            <person name="Zhu X."/>
            <person name="Smith H.O."/>
            <person name="Gibbs R.A."/>
            <person name="Myers E.W."/>
            <person name="Rubin G.M."/>
            <person name="Venter J.C."/>
        </authorList>
    </citation>
    <scope>NUCLEOTIDE SEQUENCE [LARGE SCALE GENOMIC DNA]</scope>
    <source>
        <strain evidence="3">Berkeley</strain>
    </source>
</reference>
<reference evidence="10" key="3">
    <citation type="journal article" date="2002" name="Genome Biol.">
        <title>Annotation of the Drosophila melanogaster euchromatic genome: a systematic review.</title>
        <authorList>
            <person name="Misra S."/>
            <person name="Crosby M.A."/>
            <person name="Mungall C.J."/>
            <person name="Matthews B.B."/>
            <person name="Campbell K.S."/>
            <person name="Hradecky P."/>
            <person name="Huang Y."/>
            <person name="Kaminker J.S."/>
            <person name="Millburn G.H."/>
            <person name="Prochnik S.E."/>
            <person name="Smith C.D."/>
            <person name="Tupy J.L."/>
            <person name="Whitfield E.J."/>
            <person name="Bayraktaroglu L."/>
            <person name="Berman B.P."/>
            <person name="Bettencourt B.R."/>
            <person name="Celniker S.E."/>
            <person name="de Grey A.D.N.J."/>
            <person name="Drysdale R.A."/>
            <person name="Harris N.L."/>
            <person name="Richter J."/>
            <person name="Russo S."/>
            <person name="Schroeder A.J."/>
            <person name="Shu S.Q."/>
            <person name="Stapleton M."/>
            <person name="Yamada C."/>
            <person name="Ashburner M."/>
            <person name="Gelbart W.M."/>
            <person name="Rubin G.M."/>
            <person name="Lewis S.E."/>
        </authorList>
    </citation>
    <scope>GENOME REANNOTATION</scope>
    <source>
        <strain>Berkeley</strain>
    </source>
</reference>
<reference evidence="13" key="4">
    <citation type="journal article" date="2002" name="Genome Biol.">
        <title>A Drosophila full-length cDNA resource.</title>
        <authorList>
            <person name="Stapleton M."/>
            <person name="Carlson J.W."/>
            <person name="Brokstein P."/>
            <person name="Yu C."/>
            <person name="Champe M."/>
            <person name="George R.A."/>
            <person name="Guarin H."/>
            <person name="Kronmiller B."/>
            <person name="Pacleb J.M."/>
            <person name="Park S."/>
            <person name="Wan K.H."/>
            <person name="Rubin G.M."/>
            <person name="Celniker S.E."/>
        </authorList>
    </citation>
    <scope>NUCLEOTIDE SEQUENCE [LARGE SCALE MRNA]</scope>
    <source>
        <strain evidence="13">Berkeley</strain>
        <tissue evidence="5">Embryo</tissue>
    </source>
</reference>
<reference key="5">
    <citation type="submission" date="2008-09" db="EMBL/GenBank/DDBJ databases">
        <authorList>
            <person name="Carlson J.W."/>
            <person name="Booth B."/>
            <person name="Frise E."/>
            <person name="Park S."/>
            <person name="Wan K.H."/>
            <person name="Yu C."/>
            <person name="Celniker S.E."/>
        </authorList>
    </citation>
    <scope>NUCLEOTIDE SEQUENCE [LARGE SCALE MRNA]</scope>
    <source>
        <strain>Berkeley</strain>
    </source>
</reference>
<reference key="6">
    <citation type="journal article" date="2011" name="J. Proteome Res.">
        <title>Peptidomics and peptide hormone processing in the Drosophila midgut.</title>
        <authorList>
            <person name="Reiher W."/>
            <person name="Shirras C."/>
            <person name="Kahnt J."/>
            <person name="Baumeister S."/>
            <person name="Isaac R.E."/>
            <person name="Wegener C."/>
        </authorList>
    </citation>
    <scope>PROTEIN SEQUENCE OF 50-59; 102-110; 157-165; 191-200 AND 273-281</scope>
    <scope>IDENTIFICATION BY MASS SPECTROMETRY</scope>
    <scope>MASS SPECTROMETRY</scope>
    <scope>AMIDATION AT ARG-59; ARG-110; ARG-165; ARG-200 AND ARG-281</scope>
    <source>
        <tissue evidence="9">Midgut</tissue>
    </source>
</reference>
<reference key="7">
    <citation type="journal article" date="2015" name="Elife">
        <title>The neuropeptide tachykinin is essential for pheromone detection in a gustatory neural circuit.</title>
        <authorList>
            <person name="Shankar S."/>
            <person name="Chua J.Y."/>
            <person name="Tan K.J."/>
            <person name="Calvert M.E."/>
            <person name="Weng R."/>
            <person name="Ng W.C."/>
            <person name="Mori K."/>
            <person name="Yew J.Y."/>
        </authorList>
    </citation>
    <scope>FUNCTION</scope>
</reference>
<comment type="function">
    <text evidence="4 7 10">Tachykinins are active peptides which excite neurons, evoke behavioral responses, are potent vasodilators and secretagogues, and contract (directly or indirectly) many smooth muscles. Stimulates gut muscle contractions (PubMed:10801863). Required for the response to the male sex pheromone CH503 which is transferred from males to females during mating and inhibits courtship behavior by other males (PubMed:26083710). The Gr68a gustatory receptor is required for detection of the pheromone and Gr68a-expressing neurons in the male foreleg relay signals to the suboesophageal zone (SEZ) which leads to courtship suppression through release of tachykinin from a cluster of 8-10 neurons in the SEZ (PubMed:26083710).</text>
</comment>
<comment type="subcellular location">
    <subcellularLocation>
        <location evidence="1">Secreted</location>
    </subcellularLocation>
</comment>
<comment type="tissue specificity">
    <text evidence="4">Strong expression is seen in a group of 14 cells plus one isolated cell in the midgut of stage 17 embryos. Also expressed in a pair of medially located unidentified cells, just posterior to the brain, and in two lateral groups of cells that may be associated with tracheae. Expression in the larval gut is restricted to cells with endocrine cell-like morphology in the posterior midgut, just anterior to the malphigian tubules. In the brain, expression is detected in a restricted number of neuronal cell bodies. Expression in the adult female gut is restricted to the midgut with no expression detected in the hindgut.</text>
</comment>
<comment type="mass spectrometry">
    <molecule>Tachykinin-related peptide 1</molecule>
</comment>
<comment type="mass spectrometry">
    <molecule>Tachykinin-related peptide 2</molecule>
</comment>
<comment type="mass spectrometry">
    <molecule>Tachykinin-related peptide 3</molecule>
</comment>
<comment type="mass spectrometry">
    <molecule>Tachykinin-related peptide 4</molecule>
</comment>
<comment type="mass spectrometry">
    <molecule>Tachykinin-related peptide 5</molecule>
</comment>
<comment type="similarity">
    <text evidence="1">Belongs to the tachykinin family.</text>
</comment>
<evidence type="ECO:0000255" key="1"/>
<evidence type="ECO:0000256" key="2">
    <source>
        <dbReference type="SAM" id="MobiDB-lite"/>
    </source>
</evidence>
<evidence type="ECO:0000269" key="3">
    <source>
    </source>
</evidence>
<evidence type="ECO:0000269" key="4">
    <source>
    </source>
</evidence>
<evidence type="ECO:0000269" key="5">
    <source>
    </source>
</evidence>
<evidence type="ECO:0000269" key="6">
    <source>
    </source>
</evidence>
<evidence type="ECO:0000269" key="7">
    <source>
    </source>
</evidence>
<evidence type="ECO:0000303" key="8">
    <source>
    </source>
</evidence>
<evidence type="ECO:0000303" key="9">
    <source>
    </source>
</evidence>
<evidence type="ECO:0000305" key="10"/>
<evidence type="ECO:0000312" key="11">
    <source>
        <dbReference type="EMBL" id="AAF54735.1"/>
    </source>
</evidence>
<evidence type="ECO:0000312" key="12">
    <source>
        <dbReference type="EMBL" id="AAF89172.1"/>
    </source>
</evidence>
<evidence type="ECO:0000312" key="13">
    <source>
        <dbReference type="EMBL" id="AAL48801.1"/>
    </source>
</evidence>